<dbReference type="EC" id="1.17.1.5"/>
<dbReference type="EMBL" id="DQ310789">
    <property type="protein sequence ID" value="ABC88397.1"/>
    <property type="molecule type" value="Genomic_DNA"/>
</dbReference>
<dbReference type="PDB" id="3HRD">
    <property type="method" value="X-ray"/>
    <property type="resolution" value="2.20 A"/>
    <property type="chains" value="D/H=1-157"/>
</dbReference>
<dbReference type="PDBsum" id="3HRD"/>
<dbReference type="SMR" id="Q0QLF3"/>
<dbReference type="DIP" id="DIP-48912N"/>
<dbReference type="IntAct" id="Q0QLF3">
    <property type="interactions" value="1"/>
</dbReference>
<dbReference type="STRING" id="1528.SAMN04488579_11215"/>
<dbReference type="KEGG" id="ag:ABC88397"/>
<dbReference type="BioCyc" id="MetaCyc:MONOMER-11708"/>
<dbReference type="UniPathway" id="UPA01010">
    <property type="reaction ID" value="UER01011"/>
</dbReference>
<dbReference type="EvolutionaryTrace" id="Q0QLF3"/>
<dbReference type="GO" id="GO:0051537">
    <property type="term" value="F:2 iron, 2 sulfur cluster binding"/>
    <property type="evidence" value="ECO:0007669"/>
    <property type="project" value="UniProtKB-KW"/>
</dbReference>
<dbReference type="GO" id="GO:0046872">
    <property type="term" value="F:metal ion binding"/>
    <property type="evidence" value="ECO:0007669"/>
    <property type="project" value="UniProtKB-KW"/>
</dbReference>
<dbReference type="GO" id="GO:0050138">
    <property type="term" value="F:nicotinate dehydrogenase activity"/>
    <property type="evidence" value="ECO:0000314"/>
    <property type="project" value="UniProtKB"/>
</dbReference>
<dbReference type="GO" id="GO:0000166">
    <property type="term" value="F:nucleotide binding"/>
    <property type="evidence" value="ECO:0007669"/>
    <property type="project" value="UniProtKB-KW"/>
</dbReference>
<dbReference type="GO" id="GO:1901848">
    <property type="term" value="P:nicotinate catabolic process"/>
    <property type="evidence" value="ECO:0000314"/>
    <property type="project" value="UniProtKB"/>
</dbReference>
<dbReference type="CDD" id="cd00207">
    <property type="entry name" value="fer2"/>
    <property type="match status" value="1"/>
</dbReference>
<dbReference type="FunFam" id="1.10.150.120:FF:000003">
    <property type="entry name" value="Carbon monoxide dehydrogenase, small subunit"/>
    <property type="match status" value="1"/>
</dbReference>
<dbReference type="FunFam" id="3.10.20.30:FF:000091">
    <property type="entry name" value="Nicotinate dehydrogenase small FeS subunit"/>
    <property type="match status" value="1"/>
</dbReference>
<dbReference type="Gene3D" id="3.10.20.30">
    <property type="match status" value="1"/>
</dbReference>
<dbReference type="Gene3D" id="1.10.150.120">
    <property type="entry name" value="[2Fe-2S]-binding domain"/>
    <property type="match status" value="1"/>
</dbReference>
<dbReference type="InterPro" id="IPR002888">
    <property type="entry name" value="2Fe-2S-bd"/>
</dbReference>
<dbReference type="InterPro" id="IPR036884">
    <property type="entry name" value="2Fe-2S-bd_dom_sf"/>
</dbReference>
<dbReference type="InterPro" id="IPR036010">
    <property type="entry name" value="2Fe-2S_ferredoxin-like_sf"/>
</dbReference>
<dbReference type="InterPro" id="IPR001041">
    <property type="entry name" value="2Fe-2S_ferredoxin-type"/>
</dbReference>
<dbReference type="InterPro" id="IPR006058">
    <property type="entry name" value="2Fe2S_fd_BS"/>
</dbReference>
<dbReference type="InterPro" id="IPR012675">
    <property type="entry name" value="Beta-grasp_dom_sf"/>
</dbReference>
<dbReference type="InterPro" id="IPR051452">
    <property type="entry name" value="Diverse_Oxidoreductases"/>
</dbReference>
<dbReference type="PANTHER" id="PTHR44379">
    <property type="entry name" value="OXIDOREDUCTASE WITH IRON-SULFUR SUBUNIT"/>
    <property type="match status" value="1"/>
</dbReference>
<dbReference type="PANTHER" id="PTHR44379:SF8">
    <property type="entry name" value="XANTHINE DEHYDROGENASE IRON-SULFUR-BINDING SUBUNIT XDHC-RELATED"/>
    <property type="match status" value="1"/>
</dbReference>
<dbReference type="Pfam" id="PF00111">
    <property type="entry name" value="Fer2"/>
    <property type="match status" value="1"/>
</dbReference>
<dbReference type="Pfam" id="PF01799">
    <property type="entry name" value="Fer2_2"/>
    <property type="match status" value="1"/>
</dbReference>
<dbReference type="SUPFAM" id="SSF54292">
    <property type="entry name" value="2Fe-2S ferredoxin-like"/>
    <property type="match status" value="1"/>
</dbReference>
<dbReference type="SUPFAM" id="SSF47741">
    <property type="entry name" value="CO dehydrogenase ISP C-domain like"/>
    <property type="match status" value="1"/>
</dbReference>
<dbReference type="PROSITE" id="PS00197">
    <property type="entry name" value="2FE2S_FER_1"/>
    <property type="match status" value="1"/>
</dbReference>
<dbReference type="PROSITE" id="PS51085">
    <property type="entry name" value="2FE2S_FER_2"/>
    <property type="match status" value="1"/>
</dbReference>
<gene>
    <name type="primary">ndhS</name>
</gene>
<evidence type="ECO:0000255" key="1">
    <source>
        <dbReference type="PROSITE-ProRule" id="PRU00465"/>
    </source>
</evidence>
<evidence type="ECO:0000269" key="2">
    <source>
    </source>
</evidence>
<evidence type="ECO:0000269" key="3">
    <source>
    </source>
</evidence>
<evidence type="ECO:0000269" key="4">
    <source>
    </source>
</evidence>
<evidence type="ECO:0000303" key="5">
    <source>
    </source>
</evidence>
<evidence type="ECO:0000303" key="6">
    <source>
    </source>
</evidence>
<evidence type="ECO:0000305" key="7"/>
<evidence type="ECO:0000312" key="8">
    <source>
        <dbReference type="EMBL" id="ABC88397.1"/>
    </source>
</evidence>
<evidence type="ECO:0007829" key="9">
    <source>
        <dbReference type="PDB" id="3HRD"/>
    </source>
</evidence>
<name>NDSFS_EUBBA</name>
<sequence length="157" mass="16766">MNKITINLNLNGEARSIVTEPNKRLLDLLREDFGLTSVKEGCSEGECGACTVIFNGDPVTTCCMLAGQADESTIITLEGVAEDGKPSLLQQCFLEAGAVQCGYCTPGMILTAKALLDKNPDPTDEEITVAMSGNLCRCTGYIKIHAAVRYAVERCAN</sequence>
<organism>
    <name type="scientific">Eubacterium barkeri</name>
    <name type="common">Clostridium barkeri</name>
    <dbReference type="NCBI Taxonomy" id="1528"/>
    <lineage>
        <taxon>Bacteria</taxon>
        <taxon>Bacillati</taxon>
        <taxon>Bacillota</taxon>
        <taxon>Clostridia</taxon>
        <taxon>Eubacteriales</taxon>
        <taxon>Eubacteriaceae</taxon>
        <taxon>Eubacterium</taxon>
    </lineage>
</organism>
<comment type="function">
    <text evidence="4">Catalyzes the hydroxylation of nicotinate to 6-hydroxynicotinate. Also active against 2-pyrazinecarboxylic acid, but inactive against other nicotinate analogs.</text>
</comment>
<comment type="catalytic activity">
    <reaction evidence="4">
        <text>nicotinate + NADP(+) + H2O = 6-hydroxynicotinate + NADPH + H(+)</text>
        <dbReference type="Rhea" id="RHEA:12236"/>
        <dbReference type="ChEBI" id="CHEBI:15377"/>
        <dbReference type="ChEBI" id="CHEBI:15378"/>
        <dbReference type="ChEBI" id="CHEBI:32544"/>
        <dbReference type="ChEBI" id="CHEBI:57664"/>
        <dbReference type="ChEBI" id="CHEBI:57783"/>
        <dbReference type="ChEBI" id="CHEBI:58349"/>
        <dbReference type="EC" id="1.17.1.5"/>
    </reaction>
</comment>
<comment type="cofactor">
    <cofactor evidence="3 4">
        <name>[2Fe-2S] cluster</name>
        <dbReference type="ChEBI" id="CHEBI:190135"/>
    </cofactor>
    <text evidence="3 4">Binds 2 [2Fe-2S] clusters per subunit.</text>
</comment>
<comment type="activity regulation">
    <text evidence="4">Reversibly inactivated by selenide and sulfide. Not inhibited by cyanide.</text>
</comment>
<comment type="biophysicochemical properties">
    <phDependence>
        <text evidence="4">Most stable at pH 8.0. Unstable at acidic pH values.</text>
    </phDependence>
</comment>
<comment type="pathway">
    <text evidence="2">Cofactor degradation; nicotinate degradation; 6-hydroxynicotinate from nicotinate: step 1/1.</text>
</comment>
<comment type="subunit">
    <text evidence="3 4">Heterooctamer of NDHM, NDHL, NDHS and NDHF. Dimer of heterotetramers.</text>
</comment>
<accession>Q0QLF3</accession>
<protein>
    <recommendedName>
        <fullName evidence="8">Nicotinate dehydrogenase small FeS subunit</fullName>
        <shortName evidence="5">NDH</shortName>
        <ecNumber>1.17.1.5</ecNumber>
    </recommendedName>
    <alternativeName>
        <fullName evidence="6">Nicotinic acid hydroxylase small FeS subunit</fullName>
        <shortName evidence="6">NAH</shortName>
    </alternativeName>
</protein>
<proteinExistence type="evidence at protein level"/>
<feature type="chain" id="PRO_0000404246" description="Nicotinate dehydrogenase small FeS subunit">
    <location>
        <begin position="1"/>
        <end position="157"/>
    </location>
</feature>
<feature type="domain" description="2Fe-2S ferredoxin-type" evidence="1">
    <location>
        <begin position="4"/>
        <end position="80"/>
    </location>
</feature>
<feature type="binding site" evidence="1 3">
    <location>
        <position position="42"/>
    </location>
    <ligand>
        <name>[2Fe-2S] cluster</name>
        <dbReference type="ChEBI" id="CHEBI:190135"/>
        <label>1</label>
    </ligand>
</feature>
<feature type="binding site" evidence="1 3">
    <location>
        <position position="47"/>
    </location>
    <ligand>
        <name>[2Fe-2S] cluster</name>
        <dbReference type="ChEBI" id="CHEBI:190135"/>
        <label>1</label>
    </ligand>
</feature>
<feature type="binding site" evidence="1 3">
    <location>
        <position position="50"/>
    </location>
    <ligand>
        <name>[2Fe-2S] cluster</name>
        <dbReference type="ChEBI" id="CHEBI:190135"/>
        <label>1</label>
    </ligand>
</feature>
<feature type="binding site" evidence="1 3">
    <location>
        <position position="62"/>
    </location>
    <ligand>
        <name>[2Fe-2S] cluster</name>
        <dbReference type="ChEBI" id="CHEBI:190135"/>
        <label>1</label>
    </ligand>
</feature>
<feature type="binding site" evidence="1 3">
    <location>
        <position position="101"/>
    </location>
    <ligand>
        <name>[2Fe-2S] cluster</name>
        <dbReference type="ChEBI" id="CHEBI:190135"/>
        <label>2</label>
    </ligand>
</feature>
<feature type="binding site" evidence="1 3">
    <location>
        <position position="104"/>
    </location>
    <ligand>
        <name>[2Fe-2S] cluster</name>
        <dbReference type="ChEBI" id="CHEBI:190135"/>
        <label>2</label>
    </ligand>
</feature>
<feature type="binding site" evidence="1 3">
    <location>
        <position position="136"/>
    </location>
    <ligand>
        <name>[2Fe-2S] cluster</name>
        <dbReference type="ChEBI" id="CHEBI:190135"/>
        <label>2</label>
    </ligand>
</feature>
<feature type="binding site" evidence="1 3">
    <location>
        <position position="138"/>
    </location>
    <ligand>
        <name>[2Fe-2S] cluster</name>
        <dbReference type="ChEBI" id="CHEBI:190135"/>
        <label>2</label>
    </ligand>
</feature>
<feature type="strand" evidence="9">
    <location>
        <begin position="4"/>
        <end position="10"/>
    </location>
</feature>
<feature type="strand" evidence="9">
    <location>
        <begin position="13"/>
        <end position="19"/>
    </location>
</feature>
<feature type="strand" evidence="9">
    <location>
        <begin position="21"/>
        <end position="24"/>
    </location>
</feature>
<feature type="helix" evidence="9">
    <location>
        <begin position="25"/>
        <end position="30"/>
    </location>
</feature>
<feature type="strand" evidence="9">
    <location>
        <begin position="41"/>
        <end position="47"/>
    </location>
</feature>
<feature type="strand" evidence="9">
    <location>
        <begin position="51"/>
        <end position="54"/>
    </location>
</feature>
<feature type="strand" evidence="9">
    <location>
        <begin position="57"/>
        <end position="60"/>
    </location>
</feature>
<feature type="helix" evidence="9">
    <location>
        <begin position="61"/>
        <end position="63"/>
    </location>
</feature>
<feature type="helix" evidence="9">
    <location>
        <begin position="66"/>
        <end position="69"/>
    </location>
</feature>
<feature type="strand" evidence="9">
    <location>
        <begin position="72"/>
        <end position="75"/>
    </location>
</feature>
<feature type="helix" evidence="9">
    <location>
        <begin position="77"/>
        <end position="79"/>
    </location>
</feature>
<feature type="helix" evidence="9">
    <location>
        <begin position="88"/>
        <end position="96"/>
    </location>
</feature>
<feature type="helix" evidence="9">
    <location>
        <begin position="105"/>
        <end position="116"/>
    </location>
</feature>
<feature type="helix" evidence="9">
    <location>
        <begin position="124"/>
        <end position="131"/>
    </location>
</feature>
<feature type="strand" evidence="9">
    <location>
        <begin position="137"/>
        <end position="139"/>
    </location>
</feature>
<feature type="helix" evidence="9">
    <location>
        <begin position="142"/>
        <end position="157"/>
    </location>
</feature>
<reference evidence="7 8" key="1">
    <citation type="journal article" date="2006" name="Proc. Natl. Acad. Sci. U.S.A.">
        <title>Molecular and functional analysis of nicotinate catabolism in Eubacterium barkeri.</title>
        <authorList>
            <person name="Alhapel A."/>
            <person name="Darley D.J."/>
            <person name="Wagener N."/>
            <person name="Eckel E."/>
            <person name="Elsner N."/>
            <person name="Pierik A.J."/>
        </authorList>
    </citation>
    <scope>NUCLEOTIDE SEQUENCE [GENOMIC DNA]</scope>
    <scope>PATHWAY</scope>
    <source>
        <strain evidence="8">ATCC 25849 / DSM 1223 / JCM 1389 / NCIMB 10623 / VKM B-1775 / VPI 5359</strain>
    </source>
</reference>
<reference evidence="7" key="2">
    <citation type="journal article" date="1996" name="Biochemistry">
        <title>Properties of the selenium- and molybdenum-containing nicotinic acid hydroxylase from Clostridium barkeri.</title>
        <authorList>
            <person name="Gladyshev V.N."/>
            <person name="Khangulov S.V."/>
            <person name="Stadtman T.C."/>
        </authorList>
    </citation>
    <scope>PROTEIN SEQUENCE OF 1-10</scope>
    <scope>FUNCTION</scope>
    <scope>CATALYTIC ACTIVITY</scope>
    <scope>COFACTOR</scope>
    <scope>BIOPHYSICOCHEMICAL PROPERTIES</scope>
    <scope>ACTIVITY REGULATION</scope>
    <scope>SUBUNIT</scope>
    <source>
        <strain evidence="4">ATCC 25849 / DSM 1223 / JCM 1389 / NCIMB 10623 / VKM B-1775 / VPI 5359</strain>
    </source>
</reference>
<reference evidence="7" key="3">
    <citation type="journal article" date="2009" name="Proc. Natl. Acad. Sci. U.S.A.">
        <title>The Mo-Se active site of nicotinate dehydrogenase.</title>
        <authorList>
            <person name="Wagener N."/>
            <person name="Pierik A.J."/>
            <person name="Ibdah A."/>
            <person name="Hille R."/>
            <person name="Dobbek H."/>
        </authorList>
    </citation>
    <scope>X-RAY CRYSTALLOGRAPHY (2.2 ANGSTROMS) IN COMPLEX WITH FAD; IRON-SULFUR CLUSTERS; NDHM; NDHL AND NDHF</scope>
    <scope>COFACTOR</scope>
    <scope>SUBUNIT</scope>
    <source>
        <strain evidence="3">ATCC 25849 / DSM 1223 / JCM 1389 / NCIMB 10623 / VKM B-1775 / VPI 5359</strain>
    </source>
</reference>
<keyword id="KW-0001">2Fe-2S</keyword>
<keyword id="KW-0002">3D-structure</keyword>
<keyword id="KW-0903">Direct protein sequencing</keyword>
<keyword id="KW-0408">Iron</keyword>
<keyword id="KW-0411">Iron-sulfur</keyword>
<keyword id="KW-0479">Metal-binding</keyword>
<keyword id="KW-0521">NADP</keyword>
<keyword id="KW-0547">Nucleotide-binding</keyword>
<keyword id="KW-0560">Oxidoreductase</keyword>